<evidence type="ECO:0000250" key="1"/>
<evidence type="ECO:0000255" key="2"/>
<evidence type="ECO:0000305" key="3"/>
<organism>
    <name type="scientific">Danio rerio</name>
    <name type="common">Zebrafish</name>
    <name type="synonym">Brachydanio rerio</name>
    <dbReference type="NCBI Taxonomy" id="7955"/>
    <lineage>
        <taxon>Eukaryota</taxon>
        <taxon>Metazoa</taxon>
        <taxon>Chordata</taxon>
        <taxon>Craniata</taxon>
        <taxon>Vertebrata</taxon>
        <taxon>Euteleostomi</taxon>
        <taxon>Actinopterygii</taxon>
        <taxon>Neopterygii</taxon>
        <taxon>Teleostei</taxon>
        <taxon>Ostariophysi</taxon>
        <taxon>Cypriniformes</taxon>
        <taxon>Danionidae</taxon>
        <taxon>Danioninae</taxon>
        <taxon>Danio</taxon>
    </lineage>
</organism>
<accession>A8WHP3</accession>
<accession>A7YT65</accession>
<comment type="function">
    <text evidence="1">Probable sodium-dependent sugar transporter.</text>
</comment>
<comment type="subcellular location">
    <subcellularLocation>
        <location evidence="3">Membrane</location>
        <topology evidence="3">Multi-pass membrane protein</topology>
    </subcellularLocation>
</comment>
<comment type="similarity">
    <text evidence="3">Belongs to the sodium:solute symporter (SSF) (TC 2.A.21) family.</text>
</comment>
<name>SC5A9_DANRE</name>
<keyword id="KW-0325">Glycoprotein</keyword>
<keyword id="KW-0406">Ion transport</keyword>
<keyword id="KW-0472">Membrane</keyword>
<keyword id="KW-1185">Reference proteome</keyword>
<keyword id="KW-0915">Sodium</keyword>
<keyword id="KW-0739">Sodium transport</keyword>
<keyword id="KW-0812">Transmembrane</keyword>
<keyword id="KW-1133">Transmembrane helix</keyword>
<keyword id="KW-0813">Transport</keyword>
<gene>
    <name type="primary">slc5a9</name>
    <name type="ORF">si:dkey-7o6.5</name>
</gene>
<protein>
    <recommendedName>
        <fullName>Sodium/glucose cotransporter 4</fullName>
        <shortName>Na(+)/glucose cotransporter 4</shortName>
    </recommendedName>
    <alternativeName>
        <fullName>Solute carrier family 5 member 9</fullName>
    </alternativeName>
</protein>
<feature type="chain" id="PRO_0000333807" description="Sodium/glucose cotransporter 4">
    <location>
        <begin position="1"/>
        <end position="657"/>
    </location>
</feature>
<feature type="topological domain" description="Extracellular" evidence="2">
    <location>
        <begin position="1"/>
        <end position="24"/>
    </location>
</feature>
<feature type="transmembrane region" description="Helical" evidence="2">
    <location>
        <begin position="25"/>
        <end position="45"/>
    </location>
</feature>
<feature type="topological domain" description="Cytoplasmic" evidence="2">
    <location>
        <begin position="46"/>
        <end position="79"/>
    </location>
</feature>
<feature type="transmembrane region" description="Helical" evidence="2">
    <location>
        <begin position="80"/>
        <end position="100"/>
    </location>
</feature>
<feature type="topological domain" description="Extracellular" evidence="2">
    <location>
        <begin position="101"/>
        <end position="104"/>
    </location>
</feature>
<feature type="transmembrane region" description="Helical" evidence="2">
    <location>
        <begin position="105"/>
        <end position="125"/>
    </location>
</feature>
<feature type="topological domain" description="Cytoplasmic" evidence="2">
    <location>
        <begin position="126"/>
        <end position="147"/>
    </location>
</feature>
<feature type="transmembrane region" description="Helical" evidence="2">
    <location>
        <begin position="148"/>
        <end position="168"/>
    </location>
</feature>
<feature type="topological domain" description="Extracellular" evidence="2">
    <location>
        <begin position="169"/>
        <end position="180"/>
    </location>
</feature>
<feature type="transmembrane region" description="Helical" evidence="2">
    <location>
        <begin position="181"/>
        <end position="201"/>
    </location>
</feature>
<feature type="topological domain" description="Cytoplasmic" evidence="2">
    <location>
        <begin position="202"/>
        <end position="207"/>
    </location>
</feature>
<feature type="transmembrane region" description="Helical" evidence="2">
    <location>
        <begin position="208"/>
        <end position="228"/>
    </location>
</feature>
<feature type="topological domain" description="Extracellular" evidence="2">
    <location>
        <begin position="229"/>
        <end position="265"/>
    </location>
</feature>
<feature type="transmembrane region" description="Helical" evidence="2">
    <location>
        <begin position="266"/>
        <end position="286"/>
    </location>
</feature>
<feature type="topological domain" description="Cytoplasmic" evidence="2">
    <location>
        <begin position="287"/>
        <end position="307"/>
    </location>
</feature>
<feature type="transmembrane region" description="Helical" evidence="2">
    <location>
        <begin position="308"/>
        <end position="328"/>
    </location>
</feature>
<feature type="topological domain" description="Extracellular" evidence="2">
    <location>
        <begin position="329"/>
        <end position="373"/>
    </location>
</feature>
<feature type="transmembrane region" description="Helical" evidence="2">
    <location>
        <begin position="374"/>
        <end position="396"/>
    </location>
</feature>
<feature type="topological domain" description="Cytoplasmic" evidence="2">
    <location>
        <begin position="397"/>
        <end position="417"/>
    </location>
</feature>
<feature type="transmembrane region" description="Helical" evidence="2">
    <location>
        <begin position="418"/>
        <end position="438"/>
    </location>
</feature>
<feature type="topological domain" description="Extracellular" evidence="2">
    <location>
        <begin position="439"/>
        <end position="451"/>
    </location>
</feature>
<feature type="transmembrane region" description="Helical" evidence="2">
    <location>
        <begin position="452"/>
        <end position="472"/>
    </location>
</feature>
<feature type="topological domain" description="Cytoplasmic" evidence="2">
    <location>
        <begin position="473"/>
        <end position="478"/>
    </location>
</feature>
<feature type="transmembrane region" description="Helical" evidence="2">
    <location>
        <begin position="479"/>
        <end position="499"/>
    </location>
</feature>
<feature type="topological domain" description="Extracellular" evidence="2">
    <location>
        <begin position="500"/>
        <end position="520"/>
    </location>
</feature>
<feature type="transmembrane region" description="Helical" evidence="2">
    <location>
        <begin position="521"/>
        <end position="541"/>
    </location>
</feature>
<feature type="topological domain" description="Cytoplasmic" evidence="2">
    <location>
        <begin position="542"/>
        <end position="636"/>
    </location>
</feature>
<feature type="transmembrane region" description="Helical" evidence="2">
    <location>
        <begin position="637"/>
        <end position="657"/>
    </location>
</feature>
<feature type="glycosylation site" description="N-linked (GlcNAc...) asparagine" evidence="2">
    <location>
        <position position="246"/>
    </location>
</feature>
<proteinExistence type="evidence at transcript level"/>
<reference key="1">
    <citation type="journal article" date="2013" name="Nature">
        <title>The zebrafish reference genome sequence and its relationship to the human genome.</title>
        <authorList>
            <person name="Howe K."/>
            <person name="Clark M.D."/>
            <person name="Torroja C.F."/>
            <person name="Torrance J."/>
            <person name="Berthelot C."/>
            <person name="Muffato M."/>
            <person name="Collins J.E."/>
            <person name="Humphray S."/>
            <person name="McLaren K."/>
            <person name="Matthews L."/>
            <person name="McLaren S."/>
            <person name="Sealy I."/>
            <person name="Caccamo M."/>
            <person name="Churcher C."/>
            <person name="Scott C."/>
            <person name="Barrett J.C."/>
            <person name="Koch R."/>
            <person name="Rauch G.J."/>
            <person name="White S."/>
            <person name="Chow W."/>
            <person name="Kilian B."/>
            <person name="Quintais L.T."/>
            <person name="Guerra-Assuncao J.A."/>
            <person name="Zhou Y."/>
            <person name="Gu Y."/>
            <person name="Yen J."/>
            <person name="Vogel J.H."/>
            <person name="Eyre T."/>
            <person name="Redmond S."/>
            <person name="Banerjee R."/>
            <person name="Chi J."/>
            <person name="Fu B."/>
            <person name="Langley E."/>
            <person name="Maguire S.F."/>
            <person name="Laird G.K."/>
            <person name="Lloyd D."/>
            <person name="Kenyon E."/>
            <person name="Donaldson S."/>
            <person name="Sehra H."/>
            <person name="Almeida-King J."/>
            <person name="Loveland J."/>
            <person name="Trevanion S."/>
            <person name="Jones M."/>
            <person name="Quail M."/>
            <person name="Willey D."/>
            <person name="Hunt A."/>
            <person name="Burton J."/>
            <person name="Sims S."/>
            <person name="McLay K."/>
            <person name="Plumb B."/>
            <person name="Davis J."/>
            <person name="Clee C."/>
            <person name="Oliver K."/>
            <person name="Clark R."/>
            <person name="Riddle C."/>
            <person name="Elliot D."/>
            <person name="Threadgold G."/>
            <person name="Harden G."/>
            <person name="Ware D."/>
            <person name="Begum S."/>
            <person name="Mortimore B."/>
            <person name="Kerry G."/>
            <person name="Heath P."/>
            <person name="Phillimore B."/>
            <person name="Tracey A."/>
            <person name="Corby N."/>
            <person name="Dunn M."/>
            <person name="Johnson C."/>
            <person name="Wood J."/>
            <person name="Clark S."/>
            <person name="Pelan S."/>
            <person name="Griffiths G."/>
            <person name="Smith M."/>
            <person name="Glithero R."/>
            <person name="Howden P."/>
            <person name="Barker N."/>
            <person name="Lloyd C."/>
            <person name="Stevens C."/>
            <person name="Harley J."/>
            <person name="Holt K."/>
            <person name="Panagiotidis G."/>
            <person name="Lovell J."/>
            <person name="Beasley H."/>
            <person name="Henderson C."/>
            <person name="Gordon D."/>
            <person name="Auger K."/>
            <person name="Wright D."/>
            <person name="Collins J."/>
            <person name="Raisen C."/>
            <person name="Dyer L."/>
            <person name="Leung K."/>
            <person name="Robertson L."/>
            <person name="Ambridge K."/>
            <person name="Leongamornlert D."/>
            <person name="McGuire S."/>
            <person name="Gilderthorp R."/>
            <person name="Griffiths C."/>
            <person name="Manthravadi D."/>
            <person name="Nichol S."/>
            <person name="Barker G."/>
            <person name="Whitehead S."/>
            <person name="Kay M."/>
            <person name="Brown J."/>
            <person name="Murnane C."/>
            <person name="Gray E."/>
            <person name="Humphries M."/>
            <person name="Sycamore N."/>
            <person name="Barker D."/>
            <person name="Saunders D."/>
            <person name="Wallis J."/>
            <person name="Babbage A."/>
            <person name="Hammond S."/>
            <person name="Mashreghi-Mohammadi M."/>
            <person name="Barr L."/>
            <person name="Martin S."/>
            <person name="Wray P."/>
            <person name="Ellington A."/>
            <person name="Matthews N."/>
            <person name="Ellwood M."/>
            <person name="Woodmansey R."/>
            <person name="Clark G."/>
            <person name="Cooper J."/>
            <person name="Tromans A."/>
            <person name="Grafham D."/>
            <person name="Skuce C."/>
            <person name="Pandian R."/>
            <person name="Andrews R."/>
            <person name="Harrison E."/>
            <person name="Kimberley A."/>
            <person name="Garnett J."/>
            <person name="Fosker N."/>
            <person name="Hall R."/>
            <person name="Garner P."/>
            <person name="Kelly D."/>
            <person name="Bird C."/>
            <person name="Palmer S."/>
            <person name="Gehring I."/>
            <person name="Berger A."/>
            <person name="Dooley C.M."/>
            <person name="Ersan-Urun Z."/>
            <person name="Eser C."/>
            <person name="Geiger H."/>
            <person name="Geisler M."/>
            <person name="Karotki L."/>
            <person name="Kirn A."/>
            <person name="Konantz J."/>
            <person name="Konantz M."/>
            <person name="Oberlander M."/>
            <person name="Rudolph-Geiger S."/>
            <person name="Teucke M."/>
            <person name="Lanz C."/>
            <person name="Raddatz G."/>
            <person name="Osoegawa K."/>
            <person name="Zhu B."/>
            <person name="Rapp A."/>
            <person name="Widaa S."/>
            <person name="Langford C."/>
            <person name="Yang F."/>
            <person name="Schuster S.C."/>
            <person name="Carter N.P."/>
            <person name="Harrow J."/>
            <person name="Ning Z."/>
            <person name="Herrero J."/>
            <person name="Searle S.M."/>
            <person name="Enright A."/>
            <person name="Geisler R."/>
            <person name="Plasterk R.H."/>
            <person name="Lee C."/>
            <person name="Westerfield M."/>
            <person name="de Jong P.J."/>
            <person name="Zon L.I."/>
            <person name="Postlethwait J.H."/>
            <person name="Nusslein-Volhard C."/>
            <person name="Hubbard T.J."/>
            <person name="Roest Crollius H."/>
            <person name="Rogers J."/>
            <person name="Stemple D.L."/>
        </authorList>
    </citation>
    <scope>NUCLEOTIDE SEQUENCE [LARGE SCALE GENOMIC DNA]</scope>
    <source>
        <strain>Tuebingen</strain>
    </source>
</reference>
<reference key="2">
    <citation type="submission" date="2006-04" db="EMBL/GenBank/DDBJ databases">
        <authorList>
            <consortium name="NIH - Zebrafish Gene Collection (ZGC) project"/>
        </authorList>
    </citation>
    <scope>NUCLEOTIDE SEQUENCE [LARGE SCALE MRNA] OF 27-657</scope>
</reference>
<dbReference type="EMBL" id="BX005425">
    <property type="protein sequence ID" value="CAP19446.1"/>
    <property type="molecule type" value="Genomic_DNA"/>
</dbReference>
<dbReference type="EMBL" id="BC115268">
    <property type="protein sequence ID" value="AAI15269.1"/>
    <property type="molecule type" value="mRNA"/>
</dbReference>
<dbReference type="RefSeq" id="NP_001107077.1">
    <property type="nucleotide sequence ID" value="NM_001113605.1"/>
</dbReference>
<dbReference type="SMR" id="A8WHP3"/>
<dbReference type="FunCoup" id="A8WHP3">
    <property type="interactions" value="113"/>
</dbReference>
<dbReference type="STRING" id="7955.ENSDARP00000008333"/>
<dbReference type="GlyCosmos" id="A8WHP3">
    <property type="glycosylation" value="1 site, No reported glycans"/>
</dbReference>
<dbReference type="PaxDb" id="7955-ENSDARP00000008333"/>
<dbReference type="PeptideAtlas" id="A8WHP3"/>
<dbReference type="Ensembl" id="ENSDART00000024433">
    <property type="protein sequence ID" value="ENSDARP00000008333"/>
    <property type="gene ID" value="ENSDARG00000005518"/>
</dbReference>
<dbReference type="GeneID" id="564815"/>
<dbReference type="KEGG" id="dre:564815"/>
<dbReference type="AGR" id="ZFIN:ZDB-GENE-080513-3"/>
<dbReference type="CTD" id="200010"/>
<dbReference type="ZFIN" id="ZDB-GENE-080513-3">
    <property type="gene designation" value="slc5a9"/>
</dbReference>
<dbReference type="eggNOG" id="KOG2349">
    <property type="taxonomic scope" value="Eukaryota"/>
</dbReference>
<dbReference type="HOGENOM" id="CLU_018808_9_2_1"/>
<dbReference type="InParanoid" id="A8WHP3"/>
<dbReference type="OMA" id="WKRMTPT"/>
<dbReference type="OrthoDB" id="6132759at2759"/>
<dbReference type="PhylomeDB" id="A8WHP3"/>
<dbReference type="TreeFam" id="TF352855"/>
<dbReference type="Reactome" id="R-DRE-189200">
    <property type="pathway name" value="Cellular hexose transport"/>
</dbReference>
<dbReference type="PRO" id="PR:A8WHP3"/>
<dbReference type="Proteomes" id="UP000000437">
    <property type="component" value="Chromosome 8"/>
</dbReference>
<dbReference type="Bgee" id="ENSDARG00000005518">
    <property type="expression patterns" value="Expressed in intestine and 10 other cell types or tissues"/>
</dbReference>
<dbReference type="ExpressionAtlas" id="A8WHP3">
    <property type="expression patterns" value="baseline and differential"/>
</dbReference>
<dbReference type="GO" id="GO:0005886">
    <property type="term" value="C:plasma membrane"/>
    <property type="evidence" value="ECO:0000318"/>
    <property type="project" value="GO_Central"/>
</dbReference>
<dbReference type="GO" id="GO:0005412">
    <property type="term" value="F:D-glucose:sodium symporter activity"/>
    <property type="evidence" value="ECO:0000318"/>
    <property type="project" value="GO_Central"/>
</dbReference>
<dbReference type="CDD" id="cd11488">
    <property type="entry name" value="SLC5sbd_SGLT4"/>
    <property type="match status" value="1"/>
</dbReference>
<dbReference type="FunFam" id="1.20.1730.10:FF:000004">
    <property type="entry name" value="sodium/glucose cotransporter 5 isoform X1"/>
    <property type="match status" value="1"/>
</dbReference>
<dbReference type="Gene3D" id="1.20.1730.10">
    <property type="entry name" value="Sodium/glucose cotransporter"/>
    <property type="match status" value="1"/>
</dbReference>
<dbReference type="InterPro" id="IPR038377">
    <property type="entry name" value="Na/Glc_symporter_sf"/>
</dbReference>
<dbReference type="InterPro" id="IPR001734">
    <property type="entry name" value="Na/solute_symporter"/>
</dbReference>
<dbReference type="InterPro" id="IPR018212">
    <property type="entry name" value="Na/solute_symporter_CS"/>
</dbReference>
<dbReference type="NCBIfam" id="TIGR00813">
    <property type="entry name" value="sss"/>
    <property type="match status" value="1"/>
</dbReference>
<dbReference type="PANTHER" id="PTHR11819:SF96">
    <property type="entry name" value="SODIUM_GLUCOSE COTRANSPORTER 4"/>
    <property type="match status" value="1"/>
</dbReference>
<dbReference type="PANTHER" id="PTHR11819">
    <property type="entry name" value="SOLUTE CARRIER FAMILY 5"/>
    <property type="match status" value="1"/>
</dbReference>
<dbReference type="Pfam" id="PF00474">
    <property type="entry name" value="SSF"/>
    <property type="match status" value="1"/>
</dbReference>
<dbReference type="PROSITE" id="PS00456">
    <property type="entry name" value="NA_SOLUT_SYMP_1"/>
    <property type="match status" value="1"/>
</dbReference>
<dbReference type="PROSITE" id="PS00457">
    <property type="entry name" value="NA_SOLUT_SYMP_2"/>
    <property type="match status" value="1"/>
</dbReference>
<dbReference type="PROSITE" id="PS50283">
    <property type="entry name" value="NA_SOLUT_SYMP_3"/>
    <property type="match status" value="1"/>
</dbReference>
<sequence>MPASPEPVTATPEPEEVPAKFTLEAADIAVVVVYFVFVLAVGIWSSIRANRGTVGGYFLAGRSMTWWPIGASLMSSNVGSGLFIGLAGTGAAGGLAVGGFEWNAAWVLIALGWIFVPVYISAGVVTMPEYLRKRFGGQRIRIYMSVLSLILYILTKISTDIFSGALFIQVSLGWDLYLSTVILLAVTALYTIAGGLTAVIYTDALQTVIMVIGAFVLMFIAFDKVGWYEGLLVQYEKAAPALTVPNTTCHLPRSDAFHIFRDPVTGDIPWPGLIFGLTVLATWVWCTDQVIVQRSLSAKNLSHAKAGSVLGGYLKVFPMFFVVMPGMISRALYPDEVACVDPDECQKICGAKVGCSNIAYPKLVVELMPVGMRGLMIAVMMAALMSSLTSIFNSSSTLFTMDIWQRIRPRASEKELMVVGRVFILLLVALSIVWIPVIQTANSGQLFDYIQAITSFLSPPITTVFIMAIFWGRVNEQGAFWGLMVGLVVGMVRMIMEFVYGTPSCGETDLRPSLLKDVHYLYFALILLALTVLIITAVSLCTAPIPEKHLVRLTWWTRHSKEERVELEDPWAKPAGSDLSTTESEGSDEDAPAWWKRAGMWLCGLSQTTKQDLTEEERQALEKKLTSIEEDHMWKTVCNVNALILLTANVFLWGYFA</sequence>